<organism>
    <name type="scientific">Drosophila ananassae</name>
    <name type="common">Fruit fly</name>
    <dbReference type="NCBI Taxonomy" id="7217"/>
    <lineage>
        <taxon>Eukaryota</taxon>
        <taxon>Metazoa</taxon>
        <taxon>Ecdysozoa</taxon>
        <taxon>Arthropoda</taxon>
        <taxon>Hexapoda</taxon>
        <taxon>Insecta</taxon>
        <taxon>Pterygota</taxon>
        <taxon>Neoptera</taxon>
        <taxon>Endopterygota</taxon>
        <taxon>Diptera</taxon>
        <taxon>Brachycera</taxon>
        <taxon>Muscomorpha</taxon>
        <taxon>Ephydroidea</taxon>
        <taxon>Drosophilidae</taxon>
        <taxon>Drosophila</taxon>
        <taxon>Sophophora</taxon>
    </lineage>
</organism>
<reference key="1">
    <citation type="journal article" date="2007" name="Nature">
        <title>Evolution of genes and genomes on the Drosophila phylogeny.</title>
        <authorList>
            <consortium name="Drosophila 12 genomes consortium"/>
        </authorList>
    </citation>
    <scope>NUCLEOTIDE SEQUENCE [LARGE SCALE GENOMIC DNA]</scope>
    <source>
        <strain>Tucson 14024-0371.13</strain>
    </source>
</reference>
<accession>B3MHB7</accession>
<protein>
    <recommendedName>
        <fullName evidence="1">ATPase ASNA1 homolog</fullName>
        <ecNumber evidence="1">3.6.-.-</ecNumber>
    </recommendedName>
    <alternativeName>
        <fullName evidence="1">Arsenical pump-driving ATPase homolog</fullName>
    </alternativeName>
    <alternativeName>
        <fullName evidence="1">Arsenite-stimulated ATPase</fullName>
    </alternativeName>
</protein>
<dbReference type="EC" id="3.6.-.-" evidence="1"/>
<dbReference type="EMBL" id="CH902619">
    <property type="protein sequence ID" value="EDV36894.1"/>
    <property type="molecule type" value="Genomic_DNA"/>
</dbReference>
<dbReference type="SMR" id="B3MHB7"/>
<dbReference type="FunCoup" id="B3MHB7">
    <property type="interactions" value="2071"/>
</dbReference>
<dbReference type="STRING" id="7217.B3MHB7"/>
<dbReference type="EnsemblMetazoa" id="FBtr0116412">
    <property type="protein sequence ID" value="FBpp0114904"/>
    <property type="gene ID" value="FBgn0088752"/>
</dbReference>
<dbReference type="EnsemblMetazoa" id="XM_001960036.4">
    <property type="protein sequence ID" value="XP_001960072.1"/>
    <property type="gene ID" value="LOC6494576"/>
</dbReference>
<dbReference type="GeneID" id="6494576"/>
<dbReference type="KEGG" id="dan:6494576"/>
<dbReference type="eggNOG" id="KOG2825">
    <property type="taxonomic scope" value="Eukaryota"/>
</dbReference>
<dbReference type="HOGENOM" id="CLU_040761_0_0_1"/>
<dbReference type="InParanoid" id="B3MHB7"/>
<dbReference type="OMA" id="MDAPYEF"/>
<dbReference type="OrthoDB" id="1770at2759"/>
<dbReference type="PhylomeDB" id="B3MHB7"/>
<dbReference type="Proteomes" id="UP000007801">
    <property type="component" value="Unassembled WGS sequence"/>
</dbReference>
<dbReference type="GO" id="GO:0043529">
    <property type="term" value="C:GET complex"/>
    <property type="evidence" value="ECO:0007669"/>
    <property type="project" value="TreeGrafter"/>
</dbReference>
<dbReference type="GO" id="GO:0005524">
    <property type="term" value="F:ATP binding"/>
    <property type="evidence" value="ECO:0007669"/>
    <property type="project" value="UniProtKB-UniRule"/>
</dbReference>
<dbReference type="GO" id="GO:0016887">
    <property type="term" value="F:ATP hydrolysis activity"/>
    <property type="evidence" value="ECO:0007669"/>
    <property type="project" value="InterPro"/>
</dbReference>
<dbReference type="GO" id="GO:0046872">
    <property type="term" value="F:metal ion binding"/>
    <property type="evidence" value="ECO:0007669"/>
    <property type="project" value="UniProtKB-KW"/>
</dbReference>
<dbReference type="GO" id="GO:0071816">
    <property type="term" value="P:tail-anchored membrane protein insertion into ER membrane"/>
    <property type="evidence" value="ECO:0007669"/>
    <property type="project" value="TreeGrafter"/>
</dbReference>
<dbReference type="CDD" id="cd02035">
    <property type="entry name" value="ArsA"/>
    <property type="match status" value="1"/>
</dbReference>
<dbReference type="FunFam" id="3.40.50.300:FF:000235">
    <property type="entry name" value="ATPase ASNA1"/>
    <property type="match status" value="1"/>
</dbReference>
<dbReference type="Gene3D" id="3.40.50.300">
    <property type="entry name" value="P-loop containing nucleotide triphosphate hydrolases"/>
    <property type="match status" value="1"/>
</dbReference>
<dbReference type="HAMAP" id="MF_03112">
    <property type="entry name" value="Asna1_Get3"/>
    <property type="match status" value="1"/>
</dbReference>
<dbReference type="InterPro" id="IPR025723">
    <property type="entry name" value="Anion-transp_ATPase-like_dom"/>
</dbReference>
<dbReference type="InterPro" id="IPR016300">
    <property type="entry name" value="ATPase_ArsA/GET3"/>
</dbReference>
<dbReference type="InterPro" id="IPR027542">
    <property type="entry name" value="ATPase_ArsA/GET3_euk"/>
</dbReference>
<dbReference type="InterPro" id="IPR027417">
    <property type="entry name" value="P-loop_NTPase"/>
</dbReference>
<dbReference type="NCBIfam" id="TIGR00345">
    <property type="entry name" value="GET3_arsA_TRC40"/>
    <property type="match status" value="1"/>
</dbReference>
<dbReference type="PANTHER" id="PTHR10803">
    <property type="entry name" value="ARSENICAL PUMP-DRIVING ATPASE ARSENITE-TRANSLOCATING ATPASE"/>
    <property type="match status" value="1"/>
</dbReference>
<dbReference type="PANTHER" id="PTHR10803:SF3">
    <property type="entry name" value="ATPASE GET3"/>
    <property type="match status" value="1"/>
</dbReference>
<dbReference type="Pfam" id="PF02374">
    <property type="entry name" value="ArsA_ATPase"/>
    <property type="match status" value="1"/>
</dbReference>
<dbReference type="SUPFAM" id="SSF52540">
    <property type="entry name" value="P-loop containing nucleoside triphosphate hydrolases"/>
    <property type="match status" value="1"/>
</dbReference>
<feature type="chain" id="PRO_0000388148" description="ATPase ASNA1 homolog">
    <location>
        <begin position="1"/>
        <end position="336"/>
    </location>
</feature>
<feature type="active site" evidence="1">
    <location>
        <position position="58"/>
    </location>
</feature>
<feature type="binding site" evidence="1">
    <location>
        <begin position="29"/>
        <end position="36"/>
    </location>
    <ligand>
        <name>ATP</name>
        <dbReference type="ChEBI" id="CHEBI:30616"/>
    </ligand>
</feature>
<feature type="binding site" evidence="1">
    <location>
        <position position="236"/>
    </location>
    <ligand>
        <name>ATP</name>
        <dbReference type="ChEBI" id="CHEBI:30616"/>
    </ligand>
</feature>
<feature type="binding site" evidence="1">
    <location>
        <position position="263"/>
    </location>
    <ligand>
        <name>ATP</name>
        <dbReference type="ChEBI" id="CHEBI:30616"/>
    </ligand>
</feature>
<feature type="binding site" evidence="1">
    <location>
        <position position="275"/>
    </location>
    <ligand>
        <name>Zn(2+)</name>
        <dbReference type="ChEBI" id="CHEBI:29105"/>
        <note>ligand shared between dimeric partners</note>
    </ligand>
</feature>
<feature type="binding site" evidence="1">
    <location>
        <position position="278"/>
    </location>
    <ligand>
        <name>Zn(2+)</name>
        <dbReference type="ChEBI" id="CHEBI:29105"/>
        <note>ligand shared between dimeric partners</note>
    </ligand>
</feature>
<comment type="function">
    <text evidence="1">ATPase required for the post-translational delivery of tail-anchored (TA) proteins to the endoplasmic reticulum. Recognizes and selectively binds the transmembrane domain of TA proteins in the cytosol. This complex then targets to the endoplasmic reticulum by membrane-bound receptors, where the tail-anchored protein is released for insertion. This process is regulated by ATP binding and hydrolysis. ATP binding drives the homodimer towards the closed dimer state, facilitating recognition of newly synthesized TA membrane proteins. ATP hydrolysis is required for insertion. Subsequently, the homodimer reverts towards the open dimer state, lowering its affinity for the membrane-bound receptor, and returning it to the cytosol to initiate a new round of targeting.</text>
</comment>
<comment type="subunit">
    <text evidence="1">Homodimer.</text>
</comment>
<comment type="subcellular location">
    <subcellularLocation>
        <location evidence="1">Cytoplasm</location>
    </subcellularLocation>
    <subcellularLocation>
        <location evidence="1">Endoplasmic reticulum</location>
    </subcellularLocation>
</comment>
<comment type="similarity">
    <text evidence="1">Belongs to the arsA ATPase family.</text>
</comment>
<name>ASNA_DROAN</name>
<proteinExistence type="inferred from homology"/>
<keyword id="KW-0067">ATP-binding</keyword>
<keyword id="KW-0963">Cytoplasm</keyword>
<keyword id="KW-0256">Endoplasmic reticulum</keyword>
<keyword id="KW-0378">Hydrolase</keyword>
<keyword id="KW-0479">Metal-binding</keyword>
<keyword id="KW-0547">Nucleotide-binding</keyword>
<keyword id="KW-1185">Reference proteome</keyword>
<keyword id="KW-0813">Transport</keyword>
<keyword id="KW-0862">Zinc</keyword>
<gene>
    <name type="ORF">GF11712</name>
</gene>
<sequence>MGDNLEPLEPSLQNLVEQDSLKWIFVGGKGGVGKTTCSSSLAVQLAKVRESVLIISTDPAHNISDAFDQKFTKVPTKVNGFDNLFAMEIDPNAGLNELPEEYFEGENEALRVSKGVMQEMINALPGIDEAMSYAEVMKLVKGMNFSVVVFDTAPTGHTLRLIAFPQVVEKGLGKLLRLKMKVAPMLTQFVSMLGMADVNADTLSQKLDDMLRIITQVNEQFKNPDQTTFVCVCIAEFFSLYETERLVQELTKCGIDVHNIIVNQLLFLQNSHDSCSMCASRYKIQEKYLDQIADLYEDFHVTKLPLLEKEVRGPESIRSFSENLMTPYEPKAKPKE</sequence>
<evidence type="ECO:0000255" key="1">
    <source>
        <dbReference type="HAMAP-Rule" id="MF_03112"/>
    </source>
</evidence>